<feature type="chain" id="PRO_1000131576" description="UPF0251 protein Ctha_0452">
    <location>
        <begin position="1"/>
        <end position="151"/>
    </location>
</feature>
<protein>
    <recommendedName>
        <fullName evidence="1">UPF0251 protein Ctha_0452</fullName>
    </recommendedName>
</protein>
<name>Y452_CHLT3</name>
<dbReference type="EMBL" id="CP001100">
    <property type="protein sequence ID" value="ACF12923.1"/>
    <property type="molecule type" value="Genomic_DNA"/>
</dbReference>
<dbReference type="RefSeq" id="WP_012499007.1">
    <property type="nucleotide sequence ID" value="NC_011026.1"/>
</dbReference>
<dbReference type="STRING" id="517418.Ctha_0452"/>
<dbReference type="KEGG" id="cts:Ctha_0452"/>
<dbReference type="eggNOG" id="COG1342">
    <property type="taxonomic scope" value="Bacteria"/>
</dbReference>
<dbReference type="HOGENOM" id="CLU_094511_0_1_10"/>
<dbReference type="OrthoDB" id="280278at2"/>
<dbReference type="Proteomes" id="UP000001208">
    <property type="component" value="Chromosome"/>
</dbReference>
<dbReference type="Gene3D" id="1.10.10.10">
    <property type="entry name" value="Winged helix-like DNA-binding domain superfamily/Winged helix DNA-binding domain"/>
    <property type="match status" value="1"/>
</dbReference>
<dbReference type="HAMAP" id="MF_00674">
    <property type="entry name" value="UPF0251"/>
    <property type="match status" value="1"/>
</dbReference>
<dbReference type="InterPro" id="IPR013324">
    <property type="entry name" value="RNA_pol_sigma_r3/r4-like"/>
</dbReference>
<dbReference type="InterPro" id="IPR002852">
    <property type="entry name" value="UPF0251"/>
</dbReference>
<dbReference type="InterPro" id="IPR036388">
    <property type="entry name" value="WH-like_DNA-bd_sf"/>
</dbReference>
<dbReference type="PANTHER" id="PTHR37478">
    <property type="match status" value="1"/>
</dbReference>
<dbReference type="PANTHER" id="PTHR37478:SF2">
    <property type="entry name" value="UPF0251 PROTEIN TK0562"/>
    <property type="match status" value="1"/>
</dbReference>
<dbReference type="Pfam" id="PF02001">
    <property type="entry name" value="DUF134"/>
    <property type="match status" value="1"/>
</dbReference>
<dbReference type="SUPFAM" id="SSF88659">
    <property type="entry name" value="Sigma3 and sigma4 domains of RNA polymerase sigma factors"/>
    <property type="match status" value="1"/>
</dbReference>
<comment type="similarity">
    <text evidence="1">Belongs to the UPF0251 family.</text>
</comment>
<reference key="1">
    <citation type="submission" date="2008-06" db="EMBL/GenBank/DDBJ databases">
        <title>Complete sequence of Chloroherpeton thalassium ATCC 35110.</title>
        <authorList>
            <consortium name="US DOE Joint Genome Institute"/>
            <person name="Lucas S."/>
            <person name="Copeland A."/>
            <person name="Lapidus A."/>
            <person name="Glavina del Rio T."/>
            <person name="Dalin E."/>
            <person name="Tice H."/>
            <person name="Bruce D."/>
            <person name="Goodwin L."/>
            <person name="Pitluck S."/>
            <person name="Schmutz J."/>
            <person name="Larimer F."/>
            <person name="Land M."/>
            <person name="Hauser L."/>
            <person name="Kyrpides N."/>
            <person name="Mikhailova N."/>
            <person name="Liu Z."/>
            <person name="Li T."/>
            <person name="Zhao F."/>
            <person name="Overmann J."/>
            <person name="Bryant D.A."/>
            <person name="Richardson P."/>
        </authorList>
    </citation>
    <scope>NUCLEOTIDE SEQUENCE [LARGE SCALE GENOMIC DNA]</scope>
    <source>
        <strain>ATCC 35110 / GB-78</strain>
    </source>
</reference>
<evidence type="ECO:0000255" key="1">
    <source>
        <dbReference type="HAMAP-Rule" id="MF_00674"/>
    </source>
</evidence>
<keyword id="KW-1185">Reference proteome</keyword>
<accession>B3QUL7</accession>
<sequence length="151" mass="17164">MPRPFQIRKVTRLPKCKSFKPVGVPRKVLEQAILALDEYEAIRLADYLKLEHLEAAEKMGISRPTFTRLIERARTKLASAIIEAKELVIEGGHIDLQSTRLRCSDCGEEQQAEPSESSQNCPECGSENVEDMKLFFTGAKHGRQRRRRGRA</sequence>
<organism>
    <name type="scientific">Chloroherpeton thalassium (strain ATCC 35110 / GB-78)</name>
    <dbReference type="NCBI Taxonomy" id="517418"/>
    <lineage>
        <taxon>Bacteria</taxon>
        <taxon>Pseudomonadati</taxon>
        <taxon>Chlorobiota</taxon>
        <taxon>Chlorobiia</taxon>
        <taxon>Chlorobiales</taxon>
        <taxon>Chloroherpetonaceae</taxon>
        <taxon>Chloroherpeton</taxon>
    </lineage>
</organism>
<proteinExistence type="inferred from homology"/>
<gene>
    <name type="ordered locus">Ctha_0452</name>
</gene>